<gene>
    <name type="ORF">GG15093</name>
</gene>
<organism>
    <name type="scientific">Drosophila erecta</name>
    <name type="common">Fruit fly</name>
    <dbReference type="NCBI Taxonomy" id="7220"/>
    <lineage>
        <taxon>Eukaryota</taxon>
        <taxon>Metazoa</taxon>
        <taxon>Ecdysozoa</taxon>
        <taxon>Arthropoda</taxon>
        <taxon>Hexapoda</taxon>
        <taxon>Insecta</taxon>
        <taxon>Pterygota</taxon>
        <taxon>Neoptera</taxon>
        <taxon>Endopterygota</taxon>
        <taxon>Diptera</taxon>
        <taxon>Brachycera</taxon>
        <taxon>Muscomorpha</taxon>
        <taxon>Ephydroidea</taxon>
        <taxon>Drosophilidae</taxon>
        <taxon>Drosophila</taxon>
        <taxon>Sophophora</taxon>
    </lineage>
</organism>
<name>PURA_DROER</name>
<keyword id="KW-0963">Cytoplasm</keyword>
<keyword id="KW-0342">GTP-binding</keyword>
<keyword id="KW-0436">Ligase</keyword>
<keyword id="KW-0460">Magnesium</keyword>
<keyword id="KW-0479">Metal-binding</keyword>
<keyword id="KW-0547">Nucleotide-binding</keyword>
<keyword id="KW-0658">Purine biosynthesis</keyword>
<comment type="function">
    <text evidence="1">Plays an important role in the de novo pathway and in the salvage pathway of purine nucleotide biosynthesis. Catalyzes the first committed step in the biosynthesis of AMP from IMP (By similarity).</text>
</comment>
<comment type="catalytic activity">
    <reaction evidence="2">
        <text>IMP + L-aspartate + GTP = N(6)-(1,2-dicarboxyethyl)-AMP + GDP + phosphate + 2 H(+)</text>
        <dbReference type="Rhea" id="RHEA:15753"/>
        <dbReference type="ChEBI" id="CHEBI:15378"/>
        <dbReference type="ChEBI" id="CHEBI:29991"/>
        <dbReference type="ChEBI" id="CHEBI:37565"/>
        <dbReference type="ChEBI" id="CHEBI:43474"/>
        <dbReference type="ChEBI" id="CHEBI:57567"/>
        <dbReference type="ChEBI" id="CHEBI:58053"/>
        <dbReference type="ChEBI" id="CHEBI:58189"/>
        <dbReference type="EC" id="6.3.4.4"/>
    </reaction>
</comment>
<comment type="cofactor">
    <cofactor evidence="2">
        <name>Mg(2+)</name>
        <dbReference type="ChEBI" id="CHEBI:18420"/>
    </cofactor>
    <text evidence="2">Binds 1 Mg(2+) ion per subunit.</text>
</comment>
<comment type="pathway">
    <text evidence="2">Purine metabolism; AMP biosynthesis via de novo pathway; AMP from IMP: step 1/2.</text>
</comment>
<comment type="subunit">
    <text evidence="2">Homodimer.</text>
</comment>
<comment type="subcellular location">
    <subcellularLocation>
        <location evidence="2">Cytoplasm</location>
    </subcellularLocation>
</comment>
<comment type="similarity">
    <text evidence="2">Belongs to the adenylosuccinate synthetase family.</text>
</comment>
<dbReference type="EC" id="6.3.4.4" evidence="2"/>
<dbReference type="EMBL" id="CH954181">
    <property type="protein sequence ID" value="EDV48335.1"/>
    <property type="molecule type" value="Genomic_DNA"/>
</dbReference>
<dbReference type="SMR" id="B3P321"/>
<dbReference type="EnsemblMetazoa" id="FBtr0135147">
    <property type="protein sequence ID" value="FBpp0133639"/>
    <property type="gene ID" value="FBgn0107347"/>
</dbReference>
<dbReference type="EnsemblMetazoa" id="XM_001979341.3">
    <property type="protein sequence ID" value="XP_001979377.1"/>
    <property type="gene ID" value="LOC6553450"/>
</dbReference>
<dbReference type="GeneID" id="6553450"/>
<dbReference type="KEGG" id="der:6553450"/>
<dbReference type="eggNOG" id="KOG1355">
    <property type="taxonomic scope" value="Eukaryota"/>
</dbReference>
<dbReference type="HOGENOM" id="CLU_029848_3_0_1"/>
<dbReference type="OMA" id="QSYVRFL"/>
<dbReference type="OrthoDB" id="10265645at2759"/>
<dbReference type="PhylomeDB" id="B3P321"/>
<dbReference type="UniPathway" id="UPA00075">
    <property type="reaction ID" value="UER00335"/>
</dbReference>
<dbReference type="Proteomes" id="UP000008711">
    <property type="component" value="Unassembled WGS sequence"/>
</dbReference>
<dbReference type="GO" id="GO:0005737">
    <property type="term" value="C:cytoplasm"/>
    <property type="evidence" value="ECO:0007669"/>
    <property type="project" value="UniProtKB-SubCell"/>
</dbReference>
<dbReference type="GO" id="GO:0004019">
    <property type="term" value="F:adenylosuccinate synthase activity"/>
    <property type="evidence" value="ECO:0007669"/>
    <property type="project" value="UniProtKB-UniRule"/>
</dbReference>
<dbReference type="GO" id="GO:0005525">
    <property type="term" value="F:GTP binding"/>
    <property type="evidence" value="ECO:0007669"/>
    <property type="project" value="UniProtKB-UniRule"/>
</dbReference>
<dbReference type="GO" id="GO:0000287">
    <property type="term" value="F:magnesium ion binding"/>
    <property type="evidence" value="ECO:0007669"/>
    <property type="project" value="UniProtKB-UniRule"/>
</dbReference>
<dbReference type="GO" id="GO:0044208">
    <property type="term" value="P:'de novo' AMP biosynthetic process"/>
    <property type="evidence" value="ECO:0007669"/>
    <property type="project" value="UniProtKB-UniRule"/>
</dbReference>
<dbReference type="GO" id="GO:0046040">
    <property type="term" value="P:IMP metabolic process"/>
    <property type="evidence" value="ECO:0007669"/>
    <property type="project" value="TreeGrafter"/>
</dbReference>
<dbReference type="CDD" id="cd03108">
    <property type="entry name" value="AdSS"/>
    <property type="match status" value="1"/>
</dbReference>
<dbReference type="FunFam" id="3.90.170.10:FF:000001">
    <property type="entry name" value="Adenylosuccinate synthetase"/>
    <property type="match status" value="1"/>
</dbReference>
<dbReference type="FunFam" id="1.10.300.10:FF:000002">
    <property type="entry name" value="Adenylosuccinate synthetase, chloroplastic"/>
    <property type="match status" value="1"/>
</dbReference>
<dbReference type="Gene3D" id="3.40.440.10">
    <property type="entry name" value="Adenylosuccinate Synthetase, subunit A, domain 1"/>
    <property type="match status" value="1"/>
</dbReference>
<dbReference type="Gene3D" id="1.10.300.10">
    <property type="entry name" value="Adenylosuccinate Synthetase, subunit A, domain 2"/>
    <property type="match status" value="1"/>
</dbReference>
<dbReference type="Gene3D" id="3.90.170.10">
    <property type="entry name" value="Adenylosuccinate Synthetase, subunit A, domain 3"/>
    <property type="match status" value="1"/>
</dbReference>
<dbReference type="HAMAP" id="MF_00011">
    <property type="entry name" value="Adenylosucc_synth"/>
    <property type="match status" value="1"/>
</dbReference>
<dbReference type="InterPro" id="IPR018220">
    <property type="entry name" value="Adenylosuccin_syn_GTP-bd"/>
</dbReference>
<dbReference type="InterPro" id="IPR033128">
    <property type="entry name" value="Adenylosuccin_syn_Lys_AS"/>
</dbReference>
<dbReference type="InterPro" id="IPR042109">
    <property type="entry name" value="Adenylosuccinate_synth_dom1"/>
</dbReference>
<dbReference type="InterPro" id="IPR042110">
    <property type="entry name" value="Adenylosuccinate_synth_dom2"/>
</dbReference>
<dbReference type="InterPro" id="IPR042111">
    <property type="entry name" value="Adenylosuccinate_synth_dom3"/>
</dbReference>
<dbReference type="InterPro" id="IPR001114">
    <property type="entry name" value="Adenylosuccinate_synthetase"/>
</dbReference>
<dbReference type="InterPro" id="IPR027417">
    <property type="entry name" value="P-loop_NTPase"/>
</dbReference>
<dbReference type="NCBIfam" id="NF002223">
    <property type="entry name" value="PRK01117.1"/>
    <property type="match status" value="1"/>
</dbReference>
<dbReference type="NCBIfam" id="TIGR00184">
    <property type="entry name" value="purA"/>
    <property type="match status" value="1"/>
</dbReference>
<dbReference type="PANTHER" id="PTHR11846">
    <property type="entry name" value="ADENYLOSUCCINATE SYNTHETASE"/>
    <property type="match status" value="1"/>
</dbReference>
<dbReference type="PANTHER" id="PTHR11846:SF0">
    <property type="entry name" value="ADENYLOSUCCINATE SYNTHETASE"/>
    <property type="match status" value="1"/>
</dbReference>
<dbReference type="Pfam" id="PF00709">
    <property type="entry name" value="Adenylsucc_synt"/>
    <property type="match status" value="1"/>
</dbReference>
<dbReference type="SMART" id="SM00788">
    <property type="entry name" value="Adenylsucc_synt"/>
    <property type="match status" value="1"/>
</dbReference>
<dbReference type="SUPFAM" id="SSF52540">
    <property type="entry name" value="P-loop containing nucleoside triphosphate hydrolases"/>
    <property type="match status" value="1"/>
</dbReference>
<dbReference type="PROSITE" id="PS01266">
    <property type="entry name" value="ADENYLOSUCCIN_SYN_1"/>
    <property type="match status" value="1"/>
</dbReference>
<dbReference type="PROSITE" id="PS00513">
    <property type="entry name" value="ADENYLOSUCCIN_SYN_2"/>
    <property type="match status" value="1"/>
</dbReference>
<sequence>MSASATNGTHYEQLHQGRTKMYKSKVDVVLGAQWGDEGKGKVVDMLASDVDIVCRCQGGNNAGHTVVANGTEFDFHLLPSGVVNEKCVSVIGNGVVIHLPSLFDEVLKNEAKGLQHLENRLIISDRAHLVFDFHQHVDGMQEAEKGGKSLGTTKKGIGPAYSSKATRNGIRVGELLGDFNLFSEKFKSIVATHVRLFPSINVDVEAELARYKDYADKVRPYVKDTICFLHTALRNGKTILVEGANAAMLDIDFGTYPYVTSSNCSIGGVLTGLGLPPQTIGEVIGVVKAYTTRVGDGPFPTEQLNDIGDLLQTRGFEIGVTTKRKRRCGWLDIPLLKYTSLVNGYTCICVTKLDILDTLPEIKVAVAYKKPSGEKLDHFPGTIAELGNIEVEYAVLPGWQTSTEDVRNFKELPENAQSYVRFLESELSVPVRWVGVGKGRESIINVH</sequence>
<reference key="1">
    <citation type="journal article" date="2007" name="Nature">
        <title>Evolution of genes and genomes on the Drosophila phylogeny.</title>
        <authorList>
            <consortium name="Drosophila 12 genomes consortium"/>
        </authorList>
    </citation>
    <scope>NUCLEOTIDE SEQUENCE [LARGE SCALE GENOMIC DNA]</scope>
    <source>
        <strain>Tucson 14021-0224.01</strain>
    </source>
</reference>
<feature type="chain" id="PRO_0000399259" description="Adenylosuccinate synthetase">
    <location>
        <begin position="1"/>
        <end position="447"/>
    </location>
</feature>
<feature type="active site" description="Proton acceptor" evidence="2">
    <location>
        <position position="36"/>
    </location>
</feature>
<feature type="active site" description="Proton donor" evidence="2">
    <location>
        <position position="64"/>
    </location>
</feature>
<feature type="binding site" evidence="2">
    <location>
        <begin position="35"/>
        <end position="41"/>
    </location>
    <ligand>
        <name>GTP</name>
        <dbReference type="ChEBI" id="CHEBI:37565"/>
    </ligand>
</feature>
<feature type="binding site" description="in other chain" evidence="2">
    <location>
        <begin position="36"/>
        <end position="39"/>
    </location>
    <ligand>
        <name>IMP</name>
        <dbReference type="ChEBI" id="CHEBI:58053"/>
        <note>ligand shared between dimeric partners</note>
    </ligand>
</feature>
<feature type="binding site" evidence="2">
    <location>
        <position position="36"/>
    </location>
    <ligand>
        <name>Mg(2+)</name>
        <dbReference type="ChEBI" id="CHEBI:18420"/>
    </ligand>
</feature>
<feature type="binding site" description="in other chain" evidence="2">
    <location>
        <begin position="61"/>
        <end position="64"/>
    </location>
    <ligand>
        <name>IMP</name>
        <dbReference type="ChEBI" id="CHEBI:58053"/>
        <note>ligand shared between dimeric partners</note>
    </ligand>
</feature>
<feature type="binding site" evidence="2">
    <location>
        <begin position="63"/>
        <end position="65"/>
    </location>
    <ligand>
        <name>GTP</name>
        <dbReference type="ChEBI" id="CHEBI:37565"/>
    </ligand>
</feature>
<feature type="binding site" evidence="2">
    <location>
        <position position="63"/>
    </location>
    <ligand>
        <name>Mg(2+)</name>
        <dbReference type="ChEBI" id="CHEBI:18420"/>
    </ligand>
</feature>
<feature type="binding site" description="in other chain" evidence="2">
    <location>
        <position position="153"/>
    </location>
    <ligand>
        <name>IMP</name>
        <dbReference type="ChEBI" id="CHEBI:58053"/>
        <note>ligand shared between dimeric partners</note>
    </ligand>
</feature>
<feature type="binding site" evidence="2">
    <location>
        <position position="167"/>
    </location>
    <ligand>
        <name>IMP</name>
        <dbReference type="ChEBI" id="CHEBI:58053"/>
        <note>ligand shared between dimeric partners</note>
    </ligand>
</feature>
<feature type="binding site" description="in other chain" evidence="2">
    <location>
        <position position="245"/>
    </location>
    <ligand>
        <name>IMP</name>
        <dbReference type="ChEBI" id="CHEBI:58053"/>
        <note>ligand shared between dimeric partners</note>
    </ligand>
</feature>
<feature type="binding site" description="in other chain" evidence="2">
    <location>
        <position position="260"/>
    </location>
    <ligand>
        <name>IMP</name>
        <dbReference type="ChEBI" id="CHEBI:58053"/>
        <note>ligand shared between dimeric partners</note>
    </ligand>
</feature>
<feature type="binding site" evidence="2">
    <location>
        <begin position="320"/>
        <end position="326"/>
    </location>
    <ligand>
        <name>substrate</name>
    </ligand>
</feature>
<feature type="binding site" description="in other chain" evidence="2">
    <location>
        <position position="324"/>
    </location>
    <ligand>
        <name>IMP</name>
        <dbReference type="ChEBI" id="CHEBI:58053"/>
        <note>ligand shared between dimeric partners</note>
    </ligand>
</feature>
<feature type="binding site" evidence="2">
    <location>
        <position position="326"/>
    </location>
    <ligand>
        <name>GTP</name>
        <dbReference type="ChEBI" id="CHEBI:37565"/>
    </ligand>
</feature>
<feature type="binding site" evidence="2">
    <location>
        <begin position="352"/>
        <end position="354"/>
    </location>
    <ligand>
        <name>GTP</name>
        <dbReference type="ChEBI" id="CHEBI:37565"/>
    </ligand>
</feature>
<feature type="binding site" evidence="2">
    <location>
        <begin position="435"/>
        <end position="437"/>
    </location>
    <ligand>
        <name>GTP</name>
        <dbReference type="ChEBI" id="CHEBI:37565"/>
    </ligand>
</feature>
<proteinExistence type="inferred from homology"/>
<accession>B3P321</accession>
<evidence type="ECO:0000250" key="1"/>
<evidence type="ECO:0000255" key="2">
    <source>
        <dbReference type="HAMAP-Rule" id="MF_03125"/>
    </source>
</evidence>
<protein>
    <recommendedName>
        <fullName evidence="2">Adenylosuccinate synthetase</fullName>
        <shortName evidence="2">AMPSase</shortName>
        <shortName evidence="2">AdSS</shortName>
        <ecNumber evidence="2">6.3.4.4</ecNumber>
    </recommendedName>
    <alternativeName>
        <fullName evidence="2">IMP--aspartate ligase</fullName>
    </alternativeName>
</protein>